<proteinExistence type="evidence at protein level"/>
<keyword id="KW-1003">Cell membrane</keyword>
<keyword id="KW-0157">Chromophore</keyword>
<keyword id="KW-0963">Cytoplasm</keyword>
<keyword id="KW-1015">Disulfide bond</keyword>
<keyword id="KW-0297">G-protein coupled receptor</keyword>
<keyword id="KW-0325">Glycoprotein</keyword>
<keyword id="KW-0449">Lipoprotein</keyword>
<keyword id="KW-0472">Membrane</keyword>
<keyword id="KW-0564">Palmitate</keyword>
<keyword id="KW-0600">Photoreceptor protein</keyword>
<keyword id="KW-0675">Receptor</keyword>
<keyword id="KW-1185">Reference proteome</keyword>
<keyword id="KW-0681">Retinal protein</keyword>
<keyword id="KW-0716">Sensory transduction</keyword>
<keyword id="KW-0807">Transducer</keyword>
<keyword id="KW-0812">Transmembrane</keyword>
<keyword id="KW-1133">Transmembrane helix</keyword>
<name>OPN3_MOUSE</name>
<feature type="chain" id="PRO_0000197814" description="Opsin-3">
    <location>
        <begin position="1"/>
        <end position="400"/>
    </location>
</feature>
<feature type="topological domain" description="Extracellular" evidence="3">
    <location>
        <begin position="1"/>
        <end position="38"/>
    </location>
</feature>
<feature type="transmembrane region" description="Helical; Name=1" evidence="3">
    <location>
        <begin position="39"/>
        <end position="63"/>
    </location>
</feature>
<feature type="topological domain" description="Cytoplasmic" evidence="3">
    <location>
        <begin position="64"/>
        <end position="75"/>
    </location>
</feature>
<feature type="transmembrane region" description="Helical; Name=2" evidence="3">
    <location>
        <begin position="76"/>
        <end position="100"/>
    </location>
</feature>
<feature type="topological domain" description="Extracellular" evidence="3">
    <location>
        <begin position="101"/>
        <end position="115"/>
    </location>
</feature>
<feature type="transmembrane region" description="Helical; Name=3" evidence="3">
    <location>
        <begin position="116"/>
        <end position="135"/>
    </location>
</feature>
<feature type="topological domain" description="Cytoplasmic" evidence="3">
    <location>
        <begin position="136"/>
        <end position="151"/>
    </location>
</feature>
<feature type="transmembrane region" description="Helical; Name=4" evidence="3">
    <location>
        <begin position="152"/>
        <end position="175"/>
    </location>
</feature>
<feature type="topological domain" description="Extracellular" evidence="3">
    <location>
        <begin position="176"/>
        <end position="199"/>
    </location>
</feature>
<feature type="transmembrane region" description="Helical; Name=5" evidence="3">
    <location>
        <begin position="200"/>
        <end position="227"/>
    </location>
</feature>
<feature type="topological domain" description="Cytoplasmic" evidence="3">
    <location>
        <begin position="228"/>
        <end position="253"/>
    </location>
</feature>
<feature type="transmembrane region" description="Helical; Name=6" evidence="3">
    <location>
        <begin position="254"/>
        <end position="277"/>
    </location>
</feature>
<feature type="topological domain" description="Extracellular" evidence="3">
    <location>
        <begin position="278"/>
        <end position="285"/>
    </location>
</feature>
<feature type="transmembrane region" description="Helical; Name=7" evidence="3">
    <location>
        <begin position="286"/>
        <end position="310"/>
    </location>
</feature>
<feature type="topological domain" description="Cytoplasmic" evidence="3">
    <location>
        <begin position="311"/>
        <end position="400"/>
    </location>
</feature>
<feature type="modified residue" description="N6-(retinylidene)lysine">
    <location>
        <position position="297"/>
    </location>
</feature>
<feature type="lipid moiety-binding region" description="S-palmitoyl cysteine" evidence="1">
    <location>
        <position position="323"/>
    </location>
</feature>
<feature type="glycosylation site" description="N-linked (GlcNAc...) asparagine" evidence="3">
    <location>
        <position position="5"/>
    </location>
</feature>
<feature type="glycosylation site" description="N-linked (GlcNAc...) asparagine" evidence="3">
    <location>
        <position position="196"/>
    </location>
</feature>
<feature type="disulfide bond" evidence="4">
    <location>
        <begin position="112"/>
        <end position="186"/>
    </location>
</feature>
<feature type="mutagenesis site" description="Reduced basal glucose uptake and glucose-dependent mitochondrial respiration." evidence="7">
    <original>ERY</original>
    <variation>RDR</variation>
    <location>
        <begin position="136"/>
        <end position="138"/>
    </location>
</feature>
<reference key="1">
    <citation type="journal article" date="1999" name="J. Neurosci.">
        <title>Encephalopsin: a novel mammalian extraretinal opsin discretely localized in the brain.</title>
        <authorList>
            <person name="Blackshaw S."/>
            <person name="Snyder S.H."/>
        </authorList>
    </citation>
    <scope>NUCLEOTIDE SEQUENCE [MRNA]</scope>
    <scope>TISSUE SPECIFICITY</scope>
    <scope>DEVELOPMENTAL STAGE</scope>
</reference>
<reference key="2">
    <citation type="journal article" date="2002" name="Gene">
        <title>Different structural organization of the encephalopsin gene in man and mouse.</title>
        <authorList>
            <person name="Kasper G."/>
            <person name="Taudien S."/>
            <person name="Staub E."/>
            <person name="Mennerich D."/>
            <person name="Rieder M."/>
            <person name="Hinzmann B."/>
            <person name="Dahl E."/>
            <person name="Schwidetzky U."/>
            <person name="Rosenthal A."/>
            <person name="Rump A."/>
        </authorList>
    </citation>
    <scope>NUCLEOTIDE SEQUENCE [GENOMIC DNA]</scope>
    <source>
        <strain>C57BL/6J</strain>
    </source>
</reference>
<reference key="3">
    <citation type="journal article" date="2005" name="Science">
        <title>The transcriptional landscape of the mammalian genome.</title>
        <authorList>
            <person name="Carninci P."/>
            <person name="Kasukawa T."/>
            <person name="Katayama S."/>
            <person name="Gough J."/>
            <person name="Frith M.C."/>
            <person name="Maeda N."/>
            <person name="Oyama R."/>
            <person name="Ravasi T."/>
            <person name="Lenhard B."/>
            <person name="Wells C."/>
            <person name="Kodzius R."/>
            <person name="Shimokawa K."/>
            <person name="Bajic V.B."/>
            <person name="Brenner S.E."/>
            <person name="Batalov S."/>
            <person name="Forrest A.R."/>
            <person name="Zavolan M."/>
            <person name="Davis M.J."/>
            <person name="Wilming L.G."/>
            <person name="Aidinis V."/>
            <person name="Allen J.E."/>
            <person name="Ambesi-Impiombato A."/>
            <person name="Apweiler R."/>
            <person name="Aturaliya R.N."/>
            <person name="Bailey T.L."/>
            <person name="Bansal M."/>
            <person name="Baxter L."/>
            <person name="Beisel K.W."/>
            <person name="Bersano T."/>
            <person name="Bono H."/>
            <person name="Chalk A.M."/>
            <person name="Chiu K.P."/>
            <person name="Choudhary V."/>
            <person name="Christoffels A."/>
            <person name="Clutterbuck D.R."/>
            <person name="Crowe M.L."/>
            <person name="Dalla E."/>
            <person name="Dalrymple B.P."/>
            <person name="de Bono B."/>
            <person name="Della Gatta G."/>
            <person name="di Bernardo D."/>
            <person name="Down T."/>
            <person name="Engstrom P."/>
            <person name="Fagiolini M."/>
            <person name="Faulkner G."/>
            <person name="Fletcher C.F."/>
            <person name="Fukushima T."/>
            <person name="Furuno M."/>
            <person name="Futaki S."/>
            <person name="Gariboldi M."/>
            <person name="Georgii-Hemming P."/>
            <person name="Gingeras T.R."/>
            <person name="Gojobori T."/>
            <person name="Green R.E."/>
            <person name="Gustincich S."/>
            <person name="Harbers M."/>
            <person name="Hayashi Y."/>
            <person name="Hensch T.K."/>
            <person name="Hirokawa N."/>
            <person name="Hill D."/>
            <person name="Huminiecki L."/>
            <person name="Iacono M."/>
            <person name="Ikeo K."/>
            <person name="Iwama A."/>
            <person name="Ishikawa T."/>
            <person name="Jakt M."/>
            <person name="Kanapin A."/>
            <person name="Katoh M."/>
            <person name="Kawasawa Y."/>
            <person name="Kelso J."/>
            <person name="Kitamura H."/>
            <person name="Kitano H."/>
            <person name="Kollias G."/>
            <person name="Krishnan S.P."/>
            <person name="Kruger A."/>
            <person name="Kummerfeld S.K."/>
            <person name="Kurochkin I.V."/>
            <person name="Lareau L.F."/>
            <person name="Lazarevic D."/>
            <person name="Lipovich L."/>
            <person name="Liu J."/>
            <person name="Liuni S."/>
            <person name="McWilliam S."/>
            <person name="Madan Babu M."/>
            <person name="Madera M."/>
            <person name="Marchionni L."/>
            <person name="Matsuda H."/>
            <person name="Matsuzawa S."/>
            <person name="Miki H."/>
            <person name="Mignone F."/>
            <person name="Miyake S."/>
            <person name="Morris K."/>
            <person name="Mottagui-Tabar S."/>
            <person name="Mulder N."/>
            <person name="Nakano N."/>
            <person name="Nakauchi H."/>
            <person name="Ng P."/>
            <person name="Nilsson R."/>
            <person name="Nishiguchi S."/>
            <person name="Nishikawa S."/>
            <person name="Nori F."/>
            <person name="Ohara O."/>
            <person name="Okazaki Y."/>
            <person name="Orlando V."/>
            <person name="Pang K.C."/>
            <person name="Pavan W.J."/>
            <person name="Pavesi G."/>
            <person name="Pesole G."/>
            <person name="Petrovsky N."/>
            <person name="Piazza S."/>
            <person name="Reed J."/>
            <person name="Reid J.F."/>
            <person name="Ring B.Z."/>
            <person name="Ringwald M."/>
            <person name="Rost B."/>
            <person name="Ruan Y."/>
            <person name="Salzberg S.L."/>
            <person name="Sandelin A."/>
            <person name="Schneider C."/>
            <person name="Schoenbach C."/>
            <person name="Sekiguchi K."/>
            <person name="Semple C.A."/>
            <person name="Seno S."/>
            <person name="Sessa L."/>
            <person name="Sheng Y."/>
            <person name="Shibata Y."/>
            <person name="Shimada H."/>
            <person name="Shimada K."/>
            <person name="Silva D."/>
            <person name="Sinclair B."/>
            <person name="Sperling S."/>
            <person name="Stupka E."/>
            <person name="Sugiura K."/>
            <person name="Sultana R."/>
            <person name="Takenaka Y."/>
            <person name="Taki K."/>
            <person name="Tammoja K."/>
            <person name="Tan S.L."/>
            <person name="Tang S."/>
            <person name="Taylor M.S."/>
            <person name="Tegner J."/>
            <person name="Teichmann S.A."/>
            <person name="Ueda H.R."/>
            <person name="van Nimwegen E."/>
            <person name="Verardo R."/>
            <person name="Wei C.L."/>
            <person name="Yagi K."/>
            <person name="Yamanishi H."/>
            <person name="Zabarovsky E."/>
            <person name="Zhu S."/>
            <person name="Zimmer A."/>
            <person name="Hide W."/>
            <person name="Bult C."/>
            <person name="Grimmond S.M."/>
            <person name="Teasdale R.D."/>
            <person name="Liu E.T."/>
            <person name="Brusic V."/>
            <person name="Quackenbush J."/>
            <person name="Wahlestedt C."/>
            <person name="Mattick J.S."/>
            <person name="Hume D.A."/>
            <person name="Kai C."/>
            <person name="Sasaki D."/>
            <person name="Tomaru Y."/>
            <person name="Fukuda S."/>
            <person name="Kanamori-Katayama M."/>
            <person name="Suzuki M."/>
            <person name="Aoki J."/>
            <person name="Arakawa T."/>
            <person name="Iida J."/>
            <person name="Imamura K."/>
            <person name="Itoh M."/>
            <person name="Kato T."/>
            <person name="Kawaji H."/>
            <person name="Kawagashira N."/>
            <person name="Kawashima T."/>
            <person name="Kojima M."/>
            <person name="Kondo S."/>
            <person name="Konno H."/>
            <person name="Nakano K."/>
            <person name="Ninomiya N."/>
            <person name="Nishio T."/>
            <person name="Okada M."/>
            <person name="Plessy C."/>
            <person name="Shibata K."/>
            <person name="Shiraki T."/>
            <person name="Suzuki S."/>
            <person name="Tagami M."/>
            <person name="Waki K."/>
            <person name="Watahiki A."/>
            <person name="Okamura-Oho Y."/>
            <person name="Suzuki H."/>
            <person name="Kawai J."/>
            <person name="Hayashizaki Y."/>
        </authorList>
    </citation>
    <scope>NUCLEOTIDE SEQUENCE [LARGE SCALE MRNA]</scope>
    <source>
        <strain>C57BL/6J</strain>
        <tissue>Cerebellum</tissue>
        <tissue>Testis</tissue>
    </source>
</reference>
<reference key="4">
    <citation type="journal article" date="2019" name="Am. J. Physiol.">
        <title>Airway smooth muscle photorelaxation via opsin receptor activation.</title>
        <authorList>
            <person name="Yim P.D."/>
            <person name="Gallos G."/>
            <person name="Perez-Zoghbi J.F."/>
            <person name="Zhang Y."/>
            <person name="Xu D."/>
            <person name="Wu A."/>
            <person name="Berkowitz D.E."/>
            <person name="Emala C.W."/>
        </authorList>
    </citation>
    <scope>FUNCTION</scope>
    <scope>TISSUE SPECIFICITY</scope>
</reference>
<reference key="5">
    <citation type="journal article" date="2020" name="PLoS Biol.">
        <title>Cell-autonomous light sensitivity via Opsin3 regulates fuel utilization in brown adipocytes.</title>
        <authorList>
            <person name="Sato M."/>
            <person name="Tsuji T."/>
            <person name="Yang K."/>
            <person name="Ren X."/>
            <person name="Dreyfuss J.M."/>
            <person name="Huang T.L."/>
            <person name="Wang C.H."/>
            <person name="Shamsi F."/>
            <person name="Leiria L.O."/>
            <person name="Lynes M.D."/>
            <person name="Yau K.W."/>
            <person name="Tseng Y.H."/>
        </authorList>
    </citation>
    <scope>FUNCTION</scope>
    <scope>TISSUE SPECIFICITY</scope>
    <scope>DISRUPTION PHENOTYPE</scope>
    <scope>MUTAGENESIS OF 136-GLU--TYR-138</scope>
</reference>
<dbReference type="EMBL" id="AF140241">
    <property type="protein sequence ID" value="AAD32670.1"/>
    <property type="molecule type" value="mRNA"/>
</dbReference>
<dbReference type="EMBL" id="AF482427">
    <property type="protein sequence ID" value="AAO15719.1"/>
    <property type="molecule type" value="Genomic_DNA"/>
</dbReference>
<dbReference type="EMBL" id="AK043135">
    <property type="protein sequence ID" value="BAC31471.1"/>
    <property type="molecule type" value="mRNA"/>
</dbReference>
<dbReference type="EMBL" id="AK132822">
    <property type="protein sequence ID" value="BAE21380.1"/>
    <property type="molecule type" value="mRNA"/>
</dbReference>
<dbReference type="CCDS" id="CCDS15549.1"/>
<dbReference type="RefSeq" id="NP_034228.1">
    <property type="nucleotide sequence ID" value="NM_010098.4"/>
</dbReference>
<dbReference type="SMR" id="Q9WUK7"/>
<dbReference type="BioGRID" id="199368">
    <property type="interactions" value="1"/>
</dbReference>
<dbReference type="FunCoup" id="Q9WUK7">
    <property type="interactions" value="364"/>
</dbReference>
<dbReference type="STRING" id="10090.ENSMUSP00000027809"/>
<dbReference type="GlyCosmos" id="Q9WUK7">
    <property type="glycosylation" value="2 sites, No reported glycans"/>
</dbReference>
<dbReference type="GlyGen" id="Q9WUK7">
    <property type="glycosylation" value="3 sites"/>
</dbReference>
<dbReference type="PhosphoSitePlus" id="Q9WUK7"/>
<dbReference type="PaxDb" id="10090-ENSMUSP00000027809"/>
<dbReference type="ProteomicsDB" id="293518"/>
<dbReference type="Antibodypedia" id="34703">
    <property type="antibodies" value="240 antibodies from 29 providers"/>
</dbReference>
<dbReference type="DNASU" id="13603"/>
<dbReference type="Ensembl" id="ENSMUST00000027809.8">
    <property type="protein sequence ID" value="ENSMUSP00000027809.8"/>
    <property type="gene ID" value="ENSMUSG00000026525.10"/>
</dbReference>
<dbReference type="GeneID" id="13603"/>
<dbReference type="KEGG" id="mmu:13603"/>
<dbReference type="UCSC" id="uc007dtq.2">
    <property type="organism name" value="mouse"/>
</dbReference>
<dbReference type="AGR" id="MGI:1338022"/>
<dbReference type="CTD" id="23596"/>
<dbReference type="MGI" id="MGI:1338022">
    <property type="gene designation" value="Opn3"/>
</dbReference>
<dbReference type="VEuPathDB" id="HostDB:ENSMUSG00000026525"/>
<dbReference type="eggNOG" id="KOG3656">
    <property type="taxonomic scope" value="Eukaryota"/>
</dbReference>
<dbReference type="GeneTree" id="ENSGT01120000271853"/>
<dbReference type="HOGENOM" id="CLU_009579_3_0_1"/>
<dbReference type="InParanoid" id="Q9WUK7"/>
<dbReference type="OMA" id="IDDNSKH"/>
<dbReference type="OrthoDB" id="70301at9989"/>
<dbReference type="PhylomeDB" id="Q9WUK7"/>
<dbReference type="TreeFam" id="TF324998"/>
<dbReference type="Reactome" id="R-MMU-418594">
    <property type="pathway name" value="G alpha (i) signalling events"/>
</dbReference>
<dbReference type="Reactome" id="R-MMU-419771">
    <property type="pathway name" value="Opsins"/>
</dbReference>
<dbReference type="BioGRID-ORCS" id="13603">
    <property type="hits" value="2 hits in 78 CRISPR screens"/>
</dbReference>
<dbReference type="ChiTaRS" id="Opn3">
    <property type="organism name" value="mouse"/>
</dbReference>
<dbReference type="PRO" id="PR:Q9WUK7"/>
<dbReference type="Proteomes" id="UP000000589">
    <property type="component" value="Chromosome 1"/>
</dbReference>
<dbReference type="RNAct" id="Q9WUK7">
    <property type="molecule type" value="protein"/>
</dbReference>
<dbReference type="Bgee" id="ENSMUSG00000026525">
    <property type="expression patterns" value="Expressed in epididymal fat pad and 180 other cell types or tissues"/>
</dbReference>
<dbReference type="GO" id="GO:0005737">
    <property type="term" value="C:cytoplasm"/>
    <property type="evidence" value="ECO:0000250"/>
    <property type="project" value="UniProtKB"/>
</dbReference>
<dbReference type="GO" id="GO:0005886">
    <property type="term" value="C:plasma membrane"/>
    <property type="evidence" value="ECO:0000250"/>
    <property type="project" value="UniProtKB"/>
</dbReference>
<dbReference type="GO" id="GO:0005502">
    <property type="term" value="F:11-cis retinal binding"/>
    <property type="evidence" value="ECO:0000250"/>
    <property type="project" value="UniProtKB"/>
</dbReference>
<dbReference type="GO" id="GO:0005503">
    <property type="term" value="F:all-trans retinal binding"/>
    <property type="evidence" value="ECO:0000250"/>
    <property type="project" value="UniProtKB"/>
</dbReference>
<dbReference type="GO" id="GO:0004930">
    <property type="term" value="F:G protein-coupled receptor activity"/>
    <property type="evidence" value="ECO:0007669"/>
    <property type="project" value="UniProtKB-KW"/>
</dbReference>
<dbReference type="GO" id="GO:0009881">
    <property type="term" value="F:photoreceptor activity"/>
    <property type="evidence" value="ECO:0007669"/>
    <property type="project" value="UniProtKB-KW"/>
</dbReference>
<dbReference type="GO" id="GO:0071492">
    <property type="term" value="P:cellular response to UV-A"/>
    <property type="evidence" value="ECO:0007669"/>
    <property type="project" value="Ensembl"/>
</dbReference>
<dbReference type="GO" id="GO:0030216">
    <property type="term" value="P:keratinocyte differentiation"/>
    <property type="evidence" value="ECO:0000250"/>
    <property type="project" value="UniProtKB"/>
</dbReference>
<dbReference type="GO" id="GO:0043066">
    <property type="term" value="P:negative regulation of apoptotic process"/>
    <property type="evidence" value="ECO:0000250"/>
    <property type="project" value="UniProtKB"/>
</dbReference>
<dbReference type="GO" id="GO:0048022">
    <property type="term" value="P:negative regulation of melanin biosynthetic process"/>
    <property type="evidence" value="ECO:0000250"/>
    <property type="project" value="UniProtKB"/>
</dbReference>
<dbReference type="GO" id="GO:0007602">
    <property type="term" value="P:phototransduction"/>
    <property type="evidence" value="ECO:0007669"/>
    <property type="project" value="UniProtKB-KW"/>
</dbReference>
<dbReference type="GO" id="GO:1901857">
    <property type="term" value="P:positive regulation of cellular respiration"/>
    <property type="evidence" value="ECO:0000315"/>
    <property type="project" value="UniProtKB"/>
</dbReference>
<dbReference type="GO" id="GO:0046326">
    <property type="term" value="P:positive regulation of D-glucose import"/>
    <property type="evidence" value="ECO:0000315"/>
    <property type="project" value="UniProtKB"/>
</dbReference>
<dbReference type="GO" id="GO:0048023">
    <property type="term" value="P:positive regulation of melanin biosynthetic process"/>
    <property type="evidence" value="ECO:0000250"/>
    <property type="project" value="UniProtKB"/>
</dbReference>
<dbReference type="GO" id="GO:0009637">
    <property type="term" value="P:response to blue light"/>
    <property type="evidence" value="ECO:0000315"/>
    <property type="project" value="UniProtKB"/>
</dbReference>
<dbReference type="FunFam" id="1.20.1070.10:FF:000225">
    <property type="entry name" value="Opsin 3"/>
    <property type="match status" value="1"/>
</dbReference>
<dbReference type="Gene3D" id="1.20.1070.10">
    <property type="entry name" value="Rhodopsin 7-helix transmembrane proteins"/>
    <property type="match status" value="1"/>
</dbReference>
<dbReference type="InterPro" id="IPR050125">
    <property type="entry name" value="GPCR_opsins"/>
</dbReference>
<dbReference type="InterPro" id="IPR000276">
    <property type="entry name" value="GPCR_Rhodpsn"/>
</dbReference>
<dbReference type="InterPro" id="IPR017452">
    <property type="entry name" value="GPCR_Rhodpsn_7TM"/>
</dbReference>
<dbReference type="InterPro" id="IPR027430">
    <property type="entry name" value="Retinal_BS"/>
</dbReference>
<dbReference type="PANTHER" id="PTHR24240">
    <property type="entry name" value="OPSIN"/>
    <property type="match status" value="1"/>
</dbReference>
<dbReference type="Pfam" id="PF00001">
    <property type="entry name" value="7tm_1"/>
    <property type="match status" value="1"/>
</dbReference>
<dbReference type="PRINTS" id="PR00237">
    <property type="entry name" value="GPCRRHODOPSN"/>
</dbReference>
<dbReference type="SUPFAM" id="SSF81321">
    <property type="entry name" value="Family A G protein-coupled receptor-like"/>
    <property type="match status" value="1"/>
</dbReference>
<dbReference type="PROSITE" id="PS00237">
    <property type="entry name" value="G_PROTEIN_RECEP_F1_1"/>
    <property type="match status" value="1"/>
</dbReference>
<dbReference type="PROSITE" id="PS50262">
    <property type="entry name" value="G_PROTEIN_RECEP_F1_2"/>
    <property type="match status" value="1"/>
</dbReference>
<dbReference type="PROSITE" id="PS00238">
    <property type="entry name" value="OPSIN"/>
    <property type="match status" value="1"/>
</dbReference>
<protein>
    <recommendedName>
        <fullName>Opsin-3</fullName>
    </recommendedName>
    <alternativeName>
        <fullName>Encephalopsin</fullName>
    </alternativeName>
    <alternativeName>
        <fullName>Panopsin</fullName>
    </alternativeName>
</protein>
<sequence>MYSGNRSGDQGYWEDGAGAEGAAPAGTRSPAPLFSPTAYERLALLLGCLALLGVGGNLLVLLLYSKFPRLRTPTHLFLVNLSLGDLLVSLFGVTFTFASCLRNGWVWDAVGCAWDGFSGSLFGFVSITTLTVLAYERYIRVVHARVINFSWAWRAITYIWLYSLAWAGAPLLGWNRYILDIHGLGCTVDWRSKDANDSSFVLFLFLGCLVVPVGIIAHCYGHILYSVRMLRCVEDLQTIQVIKMLRYEKKVAKMCFLMAFVFLTCWMPYIVTRFLVVNGYGHLVTPTVSIVSYLFAKSSTVYNPVIYIFMNRKFRRSLLQLLCFRLLRCQRPAKNLPAAESEMHIRPIVMSQKDGDRPKKKVTFNSSSIIFIITSDESLSVEDSDRSSASKVDVIQVRPL</sequence>
<gene>
    <name type="primary">Opn3</name>
    <name type="synonym">Ecpn</name>
</gene>
<organism>
    <name type="scientific">Mus musculus</name>
    <name type="common">Mouse</name>
    <dbReference type="NCBI Taxonomy" id="10090"/>
    <lineage>
        <taxon>Eukaryota</taxon>
        <taxon>Metazoa</taxon>
        <taxon>Chordata</taxon>
        <taxon>Craniata</taxon>
        <taxon>Vertebrata</taxon>
        <taxon>Euteleostomi</taxon>
        <taxon>Mammalia</taxon>
        <taxon>Eutheria</taxon>
        <taxon>Euarchontoglires</taxon>
        <taxon>Glires</taxon>
        <taxon>Rodentia</taxon>
        <taxon>Myomorpha</taxon>
        <taxon>Muroidea</taxon>
        <taxon>Muridae</taxon>
        <taxon>Murinae</taxon>
        <taxon>Mus</taxon>
        <taxon>Mus</taxon>
    </lineage>
</organism>
<accession>Q9WUK7</accession>
<accession>Q3V0X3</accession>
<comment type="function">
    <text evidence="2 6 7">G-protein coupled receptor which selectively activates G proteins via ultraviolet A (UVA) light-mediated activation in the skin (PubMed:30284927). Binds both 11-cis retinal and all-trans retinal (By similarity). Regulates melanogenesis in melanocytes via inhibition of alpha-MSH-induced MC1R-mediated cAMP signaling, modulation of calcium flux, regulation of CAMK2 phosphorylation, and subsequently phosphorylation of CREB, p38, ERK and MITF in response to blue light (By similarity). Plays a role in melanocyte survival through regulation of intracellular calcium levels and subsequent BCL2/RAF1 signaling (By similarity). Additionally regulates apoptosis via cytochrome c release and subsequent activation of the caspase cascade (By similarity). Required for TYR and DCT blue light-induced complex formation in melanocytes (By similarity). Involved in keratinocyte differentiation in response to blue-light (By similarity). Required for the UVA-mediated induction of calcium and mitogen-activated protein kinase signaling resulting in the expression of MMP1, MMP2, MMP3, MMP9 and TIMP1 in dermal fibroblasts (By similarity). Plays a role in light-mediated glucose uptake, mitochondrial respiration and fatty acid metabolism in brown adipocyte tissues (PubMed:32040503). May be involved in photorelaxation of airway smooth muscle cells, via blue-light dependent GPCR signaling pathways (PubMed:30284927).</text>
</comment>
<comment type="subunit">
    <text evidence="2">Interacts with MC1R; the interaction results in a decrease in MC1R-mediated cAMP signaling and ultimately a decrease in melanin production in melanocytes.</text>
</comment>
<comment type="subcellular location">
    <subcellularLocation>
        <location evidence="2">Cell membrane</location>
        <topology evidence="3">Multi-pass membrane protein</topology>
    </subcellularLocation>
    <subcellularLocation>
        <location evidence="2">Cytoplasm</location>
    </subcellularLocation>
</comment>
<comment type="tissue specificity">
    <text evidence="5 6 7">Expressed in the eye (at protein level) (PubMed:30284927). Expressed in tracheal airway smooth muscle (PubMed:30284927). Expressed in brown adipocyte tissue; expression becomes more abundant during differentiation (PubMed:32040503). Strongly expressed in brain (PubMed:10234000). Highly expressed in the preoptic area and paraventricular nucleus of the hypothalamus (PubMed:10234000). Shows highly patterned expression in other regions of the brain, being enriched in selected regions of the cerebral cortex, cerebellar Purkinje cells, a subset of striatal neurons, selected thalamic nuclei, and a subset of interneurons in the ventral horn of the spinal cord (PubMed:10234000).</text>
</comment>
<comment type="developmental stage">
    <text evidence="5">Expressed at substantial levels in the dorsal pons at 18.5 dpc (PubMed:10234000). Expressed in Purkinje cells at P4, with expression becoming striped at P20 (PubMed:10234000). Expressed in the cerebral cortex from 18.5 dpc with a rostrocaudal gradient of expression becoming evident at P20 (PubMed:10234000).</text>
</comment>
<comment type="disruption phenotype">
    <text evidence="7">No visible phenotype (PubMed:32040503). Increased weight gain on a high fat diet, as a result of increased fat mass and increased insulin resistance (PubMed:32040503). Increased basal glucose uptake in brown adipocytes, potentially as a result of decreased GLUT1 expression (PubMed:32040503). Significantly reduced lipocytic rate, mitochondrial DNA expression and cytochrome C oxidase activity in brown adipocyte tissues (PubMed:32040503). Loss of light-mediated increase in glucose uptake, mitochondrial respiration, thermogenic capacity and lipid metabolism-related gene expression in brown adipocyte tissues (PubMed:32040503). Impaired maximum thermogenic capacity with reduced heat production and reduced oxygen consumption in response to norepinephrine treatment in brown adipocytes (PubMed:32040503).</text>
</comment>
<comment type="similarity">
    <text evidence="4">Belongs to the G-protein coupled receptor 1 family. Opsin subfamily.</text>
</comment>
<evidence type="ECO:0000250" key="1"/>
<evidence type="ECO:0000250" key="2">
    <source>
        <dbReference type="UniProtKB" id="Q9H1Y3"/>
    </source>
</evidence>
<evidence type="ECO:0000255" key="3"/>
<evidence type="ECO:0000255" key="4">
    <source>
        <dbReference type="PROSITE-ProRule" id="PRU00521"/>
    </source>
</evidence>
<evidence type="ECO:0000269" key="5">
    <source>
    </source>
</evidence>
<evidence type="ECO:0000269" key="6">
    <source>
    </source>
</evidence>
<evidence type="ECO:0000269" key="7">
    <source>
    </source>
</evidence>